<protein>
    <recommendedName>
        <fullName evidence="1">Succinate dehydrogenase assembly factor 3, mitochondrial</fullName>
        <shortName evidence="1">SDH assembly factor 3</shortName>
        <shortName evidence="1">SDHAF3</shortName>
    </recommendedName>
</protein>
<comment type="function">
    <text evidence="1 2">Plays an essential role in the assembly of succinate dehydrogenase (SDH), an enzyme complex (also referred to as respiratory complex II) that is a component of both the tricarboxylic acid (TCA) cycle and the mitochondrial electron transport chain, and which couples the oxidation of succinate to fumarate with the reduction of ubiquinone (coenzyme Q) to ubiquinol. Promotes maturation of the iron-sulfur protein subunit of the SDH catalytic dimer, protecting it from the deleterious effects of oxidants. May act together with SDHAF1.</text>
</comment>
<comment type="subunit">
    <text evidence="1">Interacts with the iron-sulfur protein subunit within the SDH catalytic dimer.</text>
</comment>
<comment type="subcellular location">
    <subcellularLocation>
        <location evidence="1">Mitochondrion matrix</location>
    </subcellularLocation>
</comment>
<comment type="similarity">
    <text evidence="4">Belongs to the complex I LYR family. SDHAF3 subfamily.</text>
</comment>
<sequence>MSLPRHTLAIQALYRRVLKLHRKLPLEIKALGDQYAKDEFRRHKKASQEQAVRFMQEWKIYADTIEQQVNSQQLNVLGKDLKDEHIESLTEEQLGQLYSLQEAALKPDSSEPRDI</sequence>
<evidence type="ECO:0000250" key="1">
    <source>
        <dbReference type="UniProtKB" id="Q04401"/>
    </source>
</evidence>
<evidence type="ECO:0000250" key="2">
    <source>
        <dbReference type="UniProtKB" id="Q8SZ16"/>
    </source>
</evidence>
<evidence type="ECO:0000255" key="3"/>
<evidence type="ECO:0000305" key="4"/>
<keyword id="KW-0143">Chaperone</keyword>
<keyword id="KW-0496">Mitochondrion</keyword>
<keyword id="KW-1185">Reference proteome</keyword>
<keyword id="KW-0809">Transit peptide</keyword>
<reference key="1">
    <citation type="journal article" date="2007" name="Science">
        <title>Sea anemone genome reveals ancestral eumetazoan gene repertoire and genomic organization.</title>
        <authorList>
            <person name="Putnam N.H."/>
            <person name="Srivastava M."/>
            <person name="Hellsten U."/>
            <person name="Dirks B."/>
            <person name="Chapman J."/>
            <person name="Salamov A."/>
            <person name="Terry A."/>
            <person name="Shapiro H."/>
            <person name="Lindquist E."/>
            <person name="Kapitonov V.V."/>
            <person name="Jurka J."/>
            <person name="Genikhovich G."/>
            <person name="Grigoriev I.V."/>
            <person name="Lucas S.M."/>
            <person name="Steele R.E."/>
            <person name="Finnerty J.R."/>
            <person name="Technau U."/>
            <person name="Martindale M.Q."/>
            <person name="Rokhsar D.S."/>
        </authorList>
    </citation>
    <scope>NUCLEOTIDE SEQUENCE [LARGE SCALE GENOMIC DNA]</scope>
    <source>
        <strain>CH2 X CH6</strain>
    </source>
</reference>
<gene>
    <name type="primary">acn9</name>
    <name type="ORF">v1g100698</name>
</gene>
<feature type="transit peptide" description="Mitochondrion" evidence="3">
    <location>
        <begin position="1"/>
        <end status="unknown"/>
    </location>
</feature>
<feature type="chain" id="PRO_0000328457" description="Succinate dehydrogenase assembly factor 3, mitochondrial">
    <location>
        <begin status="unknown"/>
        <end position="115"/>
    </location>
</feature>
<dbReference type="EMBL" id="DS469564">
    <property type="protein sequence ID" value="EDO42461.1"/>
    <property type="molecule type" value="Genomic_DNA"/>
</dbReference>
<dbReference type="SMR" id="A7S1H9"/>
<dbReference type="STRING" id="45351.A7S1H9"/>
<dbReference type="EnsemblMetazoa" id="EDO42461">
    <property type="protein sequence ID" value="EDO42461"/>
    <property type="gene ID" value="NEMVEDRAFT_v1g100698"/>
</dbReference>
<dbReference type="GeneID" id="5514341"/>
<dbReference type="KEGG" id="nve:5514341"/>
<dbReference type="eggNOG" id="KOG4100">
    <property type="taxonomic scope" value="Eukaryota"/>
</dbReference>
<dbReference type="HOGENOM" id="CLU_102310_2_0_1"/>
<dbReference type="InParanoid" id="A7S1H9"/>
<dbReference type="OMA" id="WQQTNEN"/>
<dbReference type="OrthoDB" id="278329at2759"/>
<dbReference type="PhylomeDB" id="A7S1H9"/>
<dbReference type="Proteomes" id="UP000001593">
    <property type="component" value="Unassembled WGS sequence"/>
</dbReference>
<dbReference type="GO" id="GO:0005758">
    <property type="term" value="C:mitochondrial intermembrane space"/>
    <property type="evidence" value="ECO:0000318"/>
    <property type="project" value="GO_Central"/>
</dbReference>
<dbReference type="GO" id="GO:0005759">
    <property type="term" value="C:mitochondrial matrix"/>
    <property type="evidence" value="ECO:0007669"/>
    <property type="project" value="UniProtKB-SubCell"/>
</dbReference>
<dbReference type="GO" id="GO:0034553">
    <property type="term" value="P:mitochondrial respiratory chain complex II assembly"/>
    <property type="evidence" value="ECO:0000318"/>
    <property type="project" value="GO_Central"/>
</dbReference>
<dbReference type="GO" id="GO:0006105">
    <property type="term" value="P:succinate metabolic process"/>
    <property type="evidence" value="ECO:0000318"/>
    <property type="project" value="GO_Central"/>
</dbReference>
<dbReference type="CDD" id="cd20270">
    <property type="entry name" value="Complex1_LYR_SDHAF3_LYRM10"/>
    <property type="match status" value="1"/>
</dbReference>
<dbReference type="InterPro" id="IPR008381">
    <property type="entry name" value="SDHAF3/Sdh7"/>
</dbReference>
<dbReference type="PANTHER" id="PTHR13137">
    <property type="entry name" value="DC11 ACN9 HOMOLOG"/>
    <property type="match status" value="1"/>
</dbReference>
<dbReference type="PANTHER" id="PTHR13137:SF6">
    <property type="entry name" value="SUCCINATE DEHYDROGENASE ASSEMBLY FACTOR 3, MITOCHONDRIAL"/>
    <property type="match status" value="1"/>
</dbReference>
<dbReference type="Pfam" id="PF13233">
    <property type="entry name" value="Complex1_LYR_2"/>
    <property type="match status" value="1"/>
</dbReference>
<proteinExistence type="inferred from homology"/>
<accession>A7S1H9</accession>
<name>SDHF3_NEMVE</name>
<organism>
    <name type="scientific">Nematostella vectensis</name>
    <name type="common">Starlet sea anemone</name>
    <dbReference type="NCBI Taxonomy" id="45351"/>
    <lineage>
        <taxon>Eukaryota</taxon>
        <taxon>Metazoa</taxon>
        <taxon>Cnidaria</taxon>
        <taxon>Anthozoa</taxon>
        <taxon>Hexacorallia</taxon>
        <taxon>Actiniaria</taxon>
        <taxon>Edwardsiidae</taxon>
        <taxon>Nematostella</taxon>
    </lineage>
</organism>